<keyword id="KW-0025">Alternative splicing</keyword>
<keyword id="KW-0963">Cytoplasm</keyword>
<keyword id="KW-0221">Differentiation</keyword>
<keyword id="KW-0903">Direct protein sequencing</keyword>
<keyword id="KW-0238">DNA-binding</keyword>
<keyword id="KW-1017">Isopeptide bond</keyword>
<keyword id="KW-0488">Methylation</keyword>
<keyword id="KW-0539">Nucleus</keyword>
<keyword id="KW-0597">Phosphoprotein</keyword>
<keyword id="KW-1185">Reference proteome</keyword>
<keyword id="KW-0804">Transcription</keyword>
<keyword id="KW-0805">Transcription regulation</keyword>
<keyword id="KW-0832">Ubl conjugation</keyword>
<name>RUNX2_MOUSE</name>
<feature type="chain" id="PRO_0000174660" description="Runt-related transcription factor 2">
    <location>
        <begin position="1"/>
        <end position="607"/>
    </location>
</feature>
<feature type="domain" description="Runt" evidence="4">
    <location>
        <begin position="187"/>
        <end position="315"/>
    </location>
</feature>
<feature type="region of interest" description="Interaction with IFI204" evidence="6">
    <location>
        <begin position="1"/>
        <end position="88"/>
    </location>
</feature>
<feature type="region of interest" description="Disordered" evidence="5">
    <location>
        <begin position="100"/>
        <end position="126"/>
    </location>
</feature>
<feature type="region of interest" description="Required for interaction with FOXO1" evidence="12">
    <location>
        <begin position="242"/>
        <end position="258"/>
    </location>
</feature>
<feature type="region of interest" description="Disordered" evidence="5">
    <location>
        <begin position="307"/>
        <end position="430"/>
    </location>
</feature>
<feature type="region of interest" description="Interaction with KAT6A" evidence="1">
    <location>
        <begin position="422"/>
        <end position="525"/>
    </location>
</feature>
<feature type="region of interest" description="Interaction with KAT6B" evidence="1">
    <location>
        <begin position="460"/>
        <end position="554"/>
    </location>
</feature>
<feature type="region of interest" description="Disordered" evidence="5">
    <location>
        <begin position="548"/>
        <end position="607"/>
    </location>
</feature>
<feature type="compositionally biased region" description="Low complexity" evidence="5">
    <location>
        <begin position="100"/>
        <end position="112"/>
    </location>
</feature>
<feature type="compositionally biased region" description="Polar residues" evidence="5">
    <location>
        <begin position="353"/>
        <end position="412"/>
    </location>
</feature>
<feature type="compositionally biased region" description="Polar residues" evidence="5">
    <location>
        <begin position="559"/>
        <end position="578"/>
    </location>
</feature>
<feature type="compositionally biased region" description="Polar residues" evidence="5">
    <location>
        <begin position="585"/>
        <end position="597"/>
    </location>
</feature>
<feature type="compositionally biased region" description="Basic and acidic residues" evidence="5">
    <location>
        <begin position="598"/>
        <end position="607"/>
    </location>
</feature>
<feature type="modified residue" description="Asymmetric dimethylarginine" evidence="23">
    <location>
        <position position="353"/>
    </location>
</feature>
<feature type="modified residue" description="Phosphoserine; by CDK1" evidence="2">
    <location>
        <position position="537"/>
    </location>
</feature>
<feature type="cross-link" description="Glycyl lysine isopeptide (Lys-Gly) (interchain with G-Cter in SUMO2)" evidence="2">
    <location>
        <position position="324"/>
    </location>
</feature>
<feature type="splice variant" id="VSP_005940" description="In isoform 3 and isoform 4." evidence="18 20">
    <original>MLHSPHKQPQNHKCGANFLQEDCKKALAFKWLISAGHYQPPRPTESVSALTTVHAGIFKAASSIYNRGHKFYLEKKGGTMASNSLFSAVTPCQQSFFW</original>
    <variation>MRIPV</variation>
    <location>
        <begin position="1"/>
        <end position="98"/>
    </location>
</feature>
<feature type="splice variant" id="VSP_005939" description="In isoform 5, isoform 6, isoform 7, isoform 8 and isoform 9." evidence="20">
    <location>
        <begin position="1"/>
        <end position="79"/>
    </location>
</feature>
<feature type="splice variant" id="VSP_005941" description="In isoform 2." evidence="19 20">
    <location>
        <begin position="47"/>
        <end position="57"/>
    </location>
</feature>
<feature type="splice variant" id="VSP_005942" description="In isoform 3 and isoform 4." evidence="18 20">
    <location>
        <position position="156"/>
    </location>
</feature>
<feature type="splice variant" id="VSP_005943" description="In isoform 6 and isoform 9." evidence="20">
    <location>
        <begin position="316"/>
        <end position="373"/>
    </location>
</feature>
<feature type="splice variant" id="VSP_005944" description="In isoform 4." evidence="18 20">
    <original>PS</original>
    <variation>LS</variation>
    <location>
        <begin position="399"/>
        <end position="400"/>
    </location>
</feature>
<feature type="splice variant" id="VSP_005945" description="In isoform 4." evidence="18 20">
    <location>
        <begin position="401"/>
        <end position="607"/>
    </location>
</feature>
<feature type="splice variant" id="VSP_005946" description="In isoform 7." evidence="20">
    <original>DDDTATSDFCLWP</original>
    <variation>GFCGTTTTTTTKL</variation>
    <location>
        <begin position="427"/>
        <end position="439"/>
    </location>
</feature>
<feature type="splice variant" id="VSP_005947" description="In isoform 8 and isoform 9." evidence="20">
    <original>DDTATSDFCLWPSSLSKKSQAGASELGPFSDPRQFPSISSLTESRFSNPRMHYPATFTYTPPVTSGMSLGMSATTHYHTYLPPPYPGSSQSQSGPFQTSSTPYLYYGTSSASYQFPMVPGGDRSPSRMVPPCTTTSNGSTLLNPNLPNQNDGVDADGSHSSSPTVLNSSGRMDESVWRPY</original>
    <variation>SEPSTLDSQSSTTLFLSSEEPGPSTAALPSPSSSCEPQPFSPSPMLPPLLQPLSTASTVPAPCVPRRTGLYTIVTSSPEAAPHLVDWMPSCPTATSPGVRGKDHERPQTMMAPAPALASERGHSQHAGPARDDHAEHPGTSPKPCAPPAAAATLEASVGDILVELRTMNGHLDIIAKALTKLASSLVPQSQPVPEAPDAN</variation>
    <location>
        <begin position="428"/>
        <end position="607"/>
    </location>
</feature>
<feature type="splice variant" id="VSP_005948" description="In isoform 7." evidence="20">
    <location>
        <begin position="440"/>
        <end position="607"/>
    </location>
</feature>
<feature type="sequence conflict" description="In Ref. 4; AAC78626." evidence="21" ref="4">
    <original>A</original>
    <variation>S</variation>
    <location>
        <position position="266"/>
    </location>
</feature>
<feature type="sequence conflict" description="In Ref. 4; AAC78626." evidence="21" ref="4">
    <original>G</original>
    <variation>S</variation>
    <location>
        <position position="280"/>
    </location>
</feature>
<feature type="sequence conflict" description="In Ref. 4; AAC78626." evidence="21" ref="4">
    <original>D</original>
    <variation>N</variation>
    <location>
        <position position="373"/>
    </location>
</feature>
<feature type="sequence conflict" description="In Ref. 4; AAC78626." evidence="21" ref="4">
    <original>R</original>
    <variation>T</variation>
    <location>
        <position position="375"/>
    </location>
</feature>
<feature type="sequence conflict" description="In Ref. 4; AAC78626." evidence="21" ref="4">
    <original>M</original>
    <variation>L</variation>
    <location>
        <position position="396"/>
    </location>
</feature>
<feature type="sequence conflict" description="In Ref. 4; AAC78626." evidence="21" ref="4">
    <original>P</original>
    <variation>L</variation>
    <location>
        <position position="459"/>
    </location>
</feature>
<feature type="sequence conflict" description="In Ref. 4; AAC78626." evidence="21" ref="4">
    <original>R</original>
    <variation>P</variation>
    <location>
        <position position="472"/>
    </location>
</feature>
<proteinExistence type="evidence at protein level"/>
<protein>
    <recommendedName>
        <fullName evidence="22">Runt-related transcription factor 2</fullName>
    </recommendedName>
    <alternativeName>
        <fullName>Acute myeloid leukemia 3 protein</fullName>
    </alternativeName>
    <alternativeName>
        <fullName>Core-binding factor subunit alpha-1</fullName>
        <shortName>CBF-alpha-1</shortName>
    </alternativeName>
    <alternativeName>
        <fullName>Oncogene AML-3</fullName>
    </alternativeName>
    <alternativeName>
        <fullName>Osteoblast-specific transcription factor 2</fullName>
        <shortName>OSF-2</shortName>
    </alternativeName>
    <alternativeName>
        <fullName>Polyomavirus enhancer-binding protein 2 alpha A subunit</fullName>
        <shortName>PEA2-alpha A</shortName>
        <shortName evidence="20">PEBP2-alpha A</shortName>
    </alternativeName>
    <alternativeName>
        <fullName>SL3-3 enhancer factor 1 alpha A subunit</fullName>
    </alternativeName>
    <alternativeName>
        <fullName>SL3/AKV core-binding factor alpha A subunit</fullName>
    </alternativeName>
</protein>
<sequence length="607" mass="66205">MLHSPHKQPQNHKCGANFLQEDCKKALAFKWLISAGHYQPPRPTESVSALTTVHAGIFKAASSIYNRGHKFYLEKKGGTMASNSLFSAVTPCQQSFFWDPSTSRRFSPPSSSLQPGKMSDVSPVVAAQQQQQQQQQQQQQQQQQQQQQQQQQQQQQEAAAAAAAAAAAAAAAAAAVPRLRPPHDNRTMVEIIADHPAELVRTDSPNFLCSVLPSHWRCNKTLPVAFKVVALGEVPDGTVVTVMAGNDENYSAELRNASAVMKNQVARFNDLRFVGRSGRGKSFTLTITVFTNPPQVATYHRAIKVTVDGPREPRRHRQKLDDSKPSLFSDRLSDLGRIPHPSMRVGVPPQNPRPSLNSAPSPFNPQGQSQITDPRQAQSSPPWSYDQSYPSYLSQMTSPSIHSTTPLSSTRGTGLPAITDVPRRISDDDTATSDFCLWPSSLSKKSQAGASELGPFSDPRQFPSISSLTESRFSNPRMHYPATFTYTPPVTSGMSLGMSATTHYHTYLPPPYPGSSQSQSGPFQTSSTPYLYYGTSSASYQFPMVPGGDRSPSRMVPPCTTTSNGSTLLNPNLPNQNDGVDADGSHSSSPTVLNSSGRMDESVWRPY</sequence>
<comment type="function">
    <text evidence="1 10 17">Transcription factor involved in osteoblastic differentiation and skeletal morphogenesis. Essential for the maturation of osteoblasts and both intramembranous and endochondral ossification. CBF binds to the core site, 5'-PYGPYGGT-3', of a number of enhancers and promoters, including murine leukemia virus, polyomavirus enhancer, T-cell receptor enhancers, osteocalcin, osteopontin, bone sialoprotein, alpha 1(I) collagen, LCK, IL-3 and GM-CSF promoters. Inhibits KAT6B-dependent transcriptional activation (By similarity). In osteoblasts, supports transcription activation: synergizes with SPEN/MINT to enhance FGFR2-mediated activation of the osteocalcin FGF-responsive element (OCFRE).</text>
</comment>
<comment type="subunit">
    <text evidence="2 3 6 7 8 10 11 12 15">Heterodimer of an alpha and a beta subunit. The alpha subunit binds DNA as a monomer and through the Runt domain. DNA-binding is increased by heterodimerization. Interacts with XRCC6 (Ku70) and XRCC5 (Ku80). Interacts with CCNB1, KAT6A and KAT6B (By similarity). Interacts with HIVEP3. Interacts with IFI204. Interaction with SATB2; the interaction results in enhanced DNA binding and transactivation by these transcription factors. Binds to HIPK3. Interacts with FOXO1 (via a C-terminal region); the interaction inhibits RUNX2 transcriptional activity towards BGLAP. Interacts with FOXP3 (By similarity). Interacts with TMEM119 (PubMed:21239498). Interacts with OLFM2 (By similarity). Interacts with IPO7; the interaction inhibits RUNX2 nuclear translocation in osteoblasts (PubMed:35922041).</text>
</comment>
<comment type="subunit">
    <molecule>Isoform 3</molecule>
    <text evidence="9">Interacts with DDX5.</text>
</comment>
<comment type="interaction">
    <interactant intactId="EBI-903354">
        <id>Q08775</id>
    </interactant>
    <interactant intactId="EBI-646397">
        <id>Q6NZM9</id>
        <label>Hdac4</label>
    </interactant>
    <organismsDiffer>false</organismsDiffer>
    <experiments>3</experiments>
</comment>
<comment type="interaction">
    <interactant intactId="EBI-903354">
        <id>Q08775</id>
    </interactant>
    <interactant intactId="EBI-2903190">
        <id>Q9D030</id>
        <label>Twist2</label>
    </interactant>
    <organismsDiffer>false</organismsDiffer>
    <experiments>2</experiments>
</comment>
<comment type="interaction">
    <interactant intactId="EBI-903354">
        <id>Q08775</id>
    </interactant>
    <interactant intactId="EBI-7364139">
        <id>P25976</id>
        <label>Ubtf</label>
    </interactant>
    <organismsDiffer>false</organismsDiffer>
    <experiments>4</experiments>
</comment>
<comment type="interaction">
    <interactant intactId="EBI-903354">
        <id>Q08775</id>
    </interactant>
    <interactant intactId="EBI-931635">
        <id>Q6AYI1</id>
        <label>Ddx5</label>
    </interactant>
    <organismsDiffer>true</organismsDiffer>
    <experiments>2</experiments>
</comment>
<comment type="interaction">
    <interactant intactId="EBI-6119991">
        <id>Q08775-3</id>
    </interactant>
    <interactant intactId="EBI-351962">
        <id>P17844</id>
        <label>DDX5</label>
    </interactant>
    <organismsDiffer>true</organismsDiffer>
    <experiments>2</experiments>
</comment>
<comment type="subcellular location">
    <subcellularLocation>
        <location evidence="15">Nucleus</location>
    </subcellularLocation>
    <subcellularLocation>
        <location evidence="15">Cytoplasm</location>
    </subcellularLocation>
</comment>
<comment type="alternative products">
    <event type="alternative splicing"/>
    <isoform>
        <id>Q08775-1</id>
        <name>1</name>
        <sequence type="displayed"/>
    </isoform>
    <isoform>
        <id>Q08775-2</id>
        <name>2</name>
        <sequence type="described" ref="VSP_005941"/>
    </isoform>
    <isoform>
        <id>Q08775-3</id>
        <name>3</name>
        <name>PEBP2-alpha A1</name>
        <sequence type="described" ref="VSP_005940 VSP_005942"/>
    </isoform>
    <isoform>
        <id>Q08775-4</id>
        <name>4</name>
        <name>PEBP2-alpha A2</name>
        <sequence type="described" ref="VSP_005940 VSP_005942 VSP_005944 VSP_005945"/>
    </isoform>
    <isoform>
        <id>Q08775-5</id>
        <name>5</name>
        <name>G1</name>
        <sequence type="described" ref="VSP_005939"/>
    </isoform>
    <isoform>
        <id>Q08775-6</id>
        <name>6</name>
        <name>G2</name>
        <sequence type="described" ref="VSP_005939 VSP_005943"/>
    </isoform>
    <isoform>
        <id>Q08775-7</id>
        <name>7</name>
        <name>U1</name>
        <sequence type="described" ref="VSP_005939 VSP_005946 VSP_005948"/>
    </isoform>
    <isoform>
        <id>Q08775-8</id>
        <name>8</name>
        <name>Y1</name>
        <sequence type="described" ref="VSP_005939 VSP_005947"/>
    </isoform>
    <isoform>
        <id>Q08775-9</id>
        <name>9</name>
        <name>Y2</name>
        <sequence type="described" ref="VSP_005939 VSP_005943 VSP_005947"/>
    </isoform>
    <text>Additional isoforms seem to exist.</text>
</comment>
<comment type="tissue specificity">
    <text>Found in thymus and testis, T-cell lines but not in B-cell lines. Isoform 2 is exclusively found in bone, particularly in osteoblasts; isoforms 3 and 4 are expressed in T-cell lines; isoforms 5, 6, 7, 8 and 9 can be found in osteoblasts and osteosarcoma cell lines.</text>
</comment>
<comment type="developmental stage">
    <text evidence="13 14">Expressed in early bell stage dental mesenchymal cells at 15.5 dpc (at protein level) (PubMed:24028588). Expressed in bell stage dental mesenchymal cells at 17.5 dpc (PubMed:29148101).</text>
</comment>
<comment type="developmental stage">
    <molecule>Isoform 2</molecule>
    <text evidence="16">Expression occurs early during skeletal development and is restricted to cells of the mesenchymal condensations and of the osteoblast lineage at 12.5 dpc.</text>
</comment>
<comment type="induction">
    <text evidence="15">Induced during the early stages of odontoblastic differentiation in dental papilla cells (PubMed:35922041). Induced during osteoblastic differentiation (PubMed:35922041).</text>
</comment>
<comment type="domain">
    <text>A proline/serine/threonine rich region at the C-terminus is necessary for transcriptional activation of target genes and contains the phosphorylation sites.</text>
</comment>
<comment type="PTM">
    <text evidence="1">Phosphorylated; probably by MAP kinases (MAPK). Phosphorylation by HIPK3 is required for the SPEN/MINT and FGF2 transactivation during osteoblastic differentiation. Phosphorylation at Ser-537 by CDK1 promotes endothelial cell proliferation required for tumor angiogenesis probably by facilitating cell cycle progression (By similarity).</text>
</comment>
<evidence type="ECO:0000250" key="1"/>
<evidence type="ECO:0000250" key="2">
    <source>
        <dbReference type="UniProtKB" id="Q13950"/>
    </source>
</evidence>
<evidence type="ECO:0000250" key="3">
    <source>
        <dbReference type="UniProtKB" id="Q9Z2J9"/>
    </source>
</evidence>
<evidence type="ECO:0000255" key="4">
    <source>
        <dbReference type="PROSITE-ProRule" id="PRU00399"/>
    </source>
</evidence>
<evidence type="ECO:0000256" key="5">
    <source>
        <dbReference type="SAM" id="MobiDB-lite"/>
    </source>
</evidence>
<evidence type="ECO:0000269" key="6">
    <source>
    </source>
</evidence>
<evidence type="ECO:0000269" key="7">
    <source>
    </source>
</evidence>
<evidence type="ECO:0000269" key="8">
    <source>
    </source>
</evidence>
<evidence type="ECO:0000269" key="9">
    <source>
    </source>
</evidence>
<evidence type="ECO:0000269" key="10">
    <source>
    </source>
</evidence>
<evidence type="ECO:0000269" key="11">
    <source>
    </source>
</evidence>
<evidence type="ECO:0000269" key="12">
    <source>
    </source>
</evidence>
<evidence type="ECO:0000269" key="13">
    <source>
    </source>
</evidence>
<evidence type="ECO:0000269" key="14">
    <source>
    </source>
</evidence>
<evidence type="ECO:0000269" key="15">
    <source>
    </source>
</evidence>
<evidence type="ECO:0000269" key="16">
    <source>
    </source>
</evidence>
<evidence type="ECO:0000269" key="17">
    <source>
    </source>
</evidence>
<evidence type="ECO:0000303" key="18">
    <source>
    </source>
</evidence>
<evidence type="ECO:0000303" key="19">
    <source>
    </source>
</evidence>
<evidence type="ECO:0000303" key="20">
    <source>
    </source>
</evidence>
<evidence type="ECO:0000305" key="21"/>
<evidence type="ECO:0000312" key="22">
    <source>
        <dbReference type="MGI" id="MGI:99829"/>
    </source>
</evidence>
<evidence type="ECO:0007744" key="23">
    <source>
    </source>
</evidence>
<organism>
    <name type="scientific">Mus musculus</name>
    <name type="common">Mouse</name>
    <dbReference type="NCBI Taxonomy" id="10090"/>
    <lineage>
        <taxon>Eukaryota</taxon>
        <taxon>Metazoa</taxon>
        <taxon>Chordata</taxon>
        <taxon>Craniata</taxon>
        <taxon>Vertebrata</taxon>
        <taxon>Euteleostomi</taxon>
        <taxon>Mammalia</taxon>
        <taxon>Eutheria</taxon>
        <taxon>Euarchontoglires</taxon>
        <taxon>Glires</taxon>
        <taxon>Rodentia</taxon>
        <taxon>Myomorpha</taxon>
        <taxon>Muroidea</taxon>
        <taxon>Muridae</taxon>
        <taxon>Murinae</taxon>
        <taxon>Mus</taxon>
        <taxon>Mus</taxon>
    </lineage>
</organism>
<accession>Q08775</accession>
<accession>O35183</accession>
<accession>Q08776</accession>
<accession>Q9JLN0</accession>
<accession>Q9QUQ6</accession>
<accession>Q9QY29</accession>
<accession>Q9R0U4</accession>
<accession>Q9Z2J7</accession>
<gene>
    <name type="primary">Runx2</name>
    <name type="synonym">Aml3</name>
    <name evidence="19" type="synonym">Cbfa1</name>
    <name evidence="22" type="synonym">Osf2</name>
    <name evidence="20" type="synonym">Pebp2a</name>
</gene>
<dbReference type="EMBL" id="D14636">
    <property type="protein sequence ID" value="BAA03485.1"/>
    <property type="molecule type" value="mRNA"/>
</dbReference>
<dbReference type="EMBL" id="D14637">
    <property type="protein sequence ID" value="BAA03486.1"/>
    <property type="molecule type" value="mRNA"/>
</dbReference>
<dbReference type="EMBL" id="AF010284">
    <property type="protein sequence ID" value="AAB65409.1"/>
    <property type="molecule type" value="mRNA"/>
</dbReference>
<dbReference type="EMBL" id="AF005936">
    <property type="protein sequence ID" value="AAB82419.1"/>
    <property type="molecule type" value="mRNA"/>
</dbReference>
<dbReference type="EMBL" id="AF053948">
    <property type="protein sequence ID" value="AAC77440.1"/>
    <property type="molecule type" value="Genomic_DNA"/>
</dbReference>
<dbReference type="EMBL" id="AF053951">
    <property type="protein sequence ID" value="AAC78623.1"/>
    <property type="molecule type" value="mRNA"/>
</dbReference>
<dbReference type="EMBL" id="AF053956">
    <property type="protein sequence ID" value="AAC78626.1"/>
    <property type="molecule type" value="mRNA"/>
</dbReference>
<dbReference type="EMBL" id="AF134836">
    <property type="protein sequence ID" value="AAF22568.1"/>
    <property type="molecule type" value="Genomic_DNA"/>
</dbReference>
<dbReference type="EMBL" id="AF134836">
    <property type="protein sequence ID" value="AAF22569.1"/>
    <property type="molecule type" value="Genomic_DNA"/>
</dbReference>
<dbReference type="EMBL" id="AB013129">
    <property type="protein sequence ID" value="BAA85345.1"/>
    <property type="molecule type" value="Genomic_DNA"/>
</dbReference>
<dbReference type="EMBL" id="AB013129">
    <property type="protein sequence ID" value="BAA85346.1"/>
    <property type="molecule type" value="Genomic_DNA"/>
</dbReference>
<dbReference type="EMBL" id="AH009404">
    <property type="protein sequence ID" value="AAF73290.1"/>
    <property type="molecule type" value="Genomic_DNA"/>
</dbReference>
<dbReference type="CCDS" id="CCDS37624.2">
    <molecule id="Q08775-5"/>
</dbReference>
<dbReference type="PIR" id="A48233">
    <property type="entry name" value="A48233"/>
</dbReference>
<dbReference type="RefSeq" id="NP_001139510.1">
    <molecule id="Q08775-5"/>
    <property type="nucleotide sequence ID" value="NM_001146038.3"/>
</dbReference>
<dbReference type="RefSeq" id="NP_001258556.1">
    <molecule id="Q08775-5"/>
    <property type="nucleotide sequence ID" value="NM_001271627.2"/>
</dbReference>
<dbReference type="RefSeq" id="NP_033950.2">
    <molecule id="Q08775-5"/>
    <property type="nucleotide sequence ID" value="NM_009820.6"/>
</dbReference>
<dbReference type="RefSeq" id="XP_006523607.1">
    <property type="nucleotide sequence ID" value="XM_006523544.2"/>
</dbReference>
<dbReference type="RefSeq" id="XP_006523608.1">
    <property type="nucleotide sequence ID" value="XM_006523545.2"/>
</dbReference>
<dbReference type="BMRB" id="Q08775"/>
<dbReference type="SMR" id="Q08775"/>
<dbReference type="BioGRID" id="198518">
    <property type="interactions" value="103"/>
</dbReference>
<dbReference type="CORUM" id="Q08775"/>
<dbReference type="DIP" id="DIP-36316N"/>
<dbReference type="ELM" id="Q08775"/>
<dbReference type="FunCoup" id="Q08775">
    <property type="interactions" value="1225"/>
</dbReference>
<dbReference type="IntAct" id="Q08775">
    <property type="interactions" value="12"/>
</dbReference>
<dbReference type="MINT" id="Q08775"/>
<dbReference type="STRING" id="10090.ENSMUSP00000109201"/>
<dbReference type="ChEMBL" id="CHEMBL1681609"/>
<dbReference type="GlyGen" id="Q08775">
    <property type="glycosylation" value="3 sites, 1 O-linked glycan (1 site)"/>
</dbReference>
<dbReference type="iPTMnet" id="Q08775"/>
<dbReference type="PhosphoSitePlus" id="Q08775"/>
<dbReference type="SwissPalm" id="Q08775"/>
<dbReference type="PaxDb" id="10090-ENSMUSP00000109202"/>
<dbReference type="PeptideAtlas" id="Q08775"/>
<dbReference type="ProteomicsDB" id="256652">
    <molecule id="Q08775-1"/>
</dbReference>
<dbReference type="ProteomicsDB" id="256653">
    <molecule id="Q08775-2"/>
</dbReference>
<dbReference type="ProteomicsDB" id="256654">
    <molecule id="Q08775-3"/>
</dbReference>
<dbReference type="ProteomicsDB" id="256655">
    <molecule id="Q08775-4"/>
</dbReference>
<dbReference type="ProteomicsDB" id="256656">
    <molecule id="Q08775-5"/>
</dbReference>
<dbReference type="ProteomicsDB" id="256657">
    <molecule id="Q08775-6"/>
</dbReference>
<dbReference type="ProteomicsDB" id="256658">
    <molecule id="Q08775-7"/>
</dbReference>
<dbReference type="ProteomicsDB" id="256659">
    <molecule id="Q08775-8"/>
</dbReference>
<dbReference type="ProteomicsDB" id="256660">
    <molecule id="Q08775-9"/>
</dbReference>
<dbReference type="Pumba" id="Q08775"/>
<dbReference type="Antibodypedia" id="3645">
    <property type="antibodies" value="895 antibodies from 45 providers"/>
</dbReference>
<dbReference type="DNASU" id="12393"/>
<dbReference type="Ensembl" id="ENSMUST00000113571.10">
    <molecule id="Q08775-5"/>
    <property type="protein sequence ID" value="ENSMUSP00000109201.4"/>
    <property type="gene ID" value="ENSMUSG00000039153.18"/>
</dbReference>
<dbReference type="Ensembl" id="ENSMUST00000159943.8">
    <molecule id="Q08775-5"/>
    <property type="protein sequence ID" value="ENSMUSP00000124918.2"/>
    <property type="gene ID" value="ENSMUSG00000039153.18"/>
</dbReference>
<dbReference type="Ensembl" id="ENSMUST00000160673.8">
    <molecule id="Q08775-2"/>
    <property type="protein sequence ID" value="ENSMUSP00000123743.2"/>
    <property type="gene ID" value="ENSMUSG00000039153.18"/>
</dbReference>
<dbReference type="Ensembl" id="ENSMUST00000238400.2">
    <molecule id="Q08775-8"/>
    <property type="protein sequence ID" value="ENSMUSP00000158748.2"/>
    <property type="gene ID" value="ENSMUSG00000039153.18"/>
</dbReference>
<dbReference type="GeneID" id="12393"/>
<dbReference type="KEGG" id="mmu:12393"/>
<dbReference type="UCSC" id="uc008cpy.3">
    <molecule id="Q08775-6"/>
    <property type="organism name" value="mouse"/>
</dbReference>
<dbReference type="UCSC" id="uc008cqa.3">
    <molecule id="Q08775-1"/>
    <property type="organism name" value="mouse"/>
</dbReference>
<dbReference type="AGR" id="MGI:99829"/>
<dbReference type="CTD" id="860"/>
<dbReference type="MGI" id="MGI:99829">
    <property type="gene designation" value="Runx2"/>
</dbReference>
<dbReference type="VEuPathDB" id="HostDB:ENSMUSG00000039153"/>
<dbReference type="eggNOG" id="KOG3982">
    <property type="taxonomic scope" value="Eukaryota"/>
</dbReference>
<dbReference type="GeneTree" id="ENSGT00940000160171"/>
<dbReference type="HOGENOM" id="CLU_032910_0_2_1"/>
<dbReference type="InParanoid" id="Q08775"/>
<dbReference type="OrthoDB" id="77162at9989"/>
<dbReference type="PhylomeDB" id="Q08775"/>
<dbReference type="Reactome" id="R-MMU-8878166">
    <molecule id="Q08775-5"/>
    <property type="pathway name" value="Transcriptional regulation by RUNX2"/>
</dbReference>
<dbReference type="Reactome" id="R-MMU-8939902">
    <molecule id="Q08775-5"/>
    <property type="pathway name" value="Regulation of RUNX2 expression and activity"/>
</dbReference>
<dbReference type="Reactome" id="R-MMU-8940973">
    <molecule id="Q08775-5"/>
    <property type="pathway name" value="RUNX2 regulates osteoblast differentiation"/>
</dbReference>
<dbReference type="Reactome" id="R-MMU-8941326">
    <molecule id="Q08775-5"/>
    <property type="pathway name" value="RUNX2 regulates bone development"/>
</dbReference>
<dbReference type="BioGRID-ORCS" id="12393">
    <property type="hits" value="5 hits in 80 CRISPR screens"/>
</dbReference>
<dbReference type="ChiTaRS" id="Runx2">
    <property type="organism name" value="mouse"/>
</dbReference>
<dbReference type="PRO" id="PR:Q08775"/>
<dbReference type="Proteomes" id="UP000000589">
    <property type="component" value="Chromosome 17"/>
</dbReference>
<dbReference type="RNAct" id="Q08775">
    <property type="molecule type" value="protein"/>
</dbReference>
<dbReference type="Bgee" id="ENSMUSG00000039153">
    <property type="expression patterns" value="Expressed in head bone and 283 other cell types or tissues"/>
</dbReference>
<dbReference type="ExpressionAtlas" id="Q08775">
    <property type="expression patterns" value="baseline and differential"/>
</dbReference>
<dbReference type="GO" id="GO:0000785">
    <property type="term" value="C:chromatin"/>
    <property type="evidence" value="ECO:0000314"/>
    <property type="project" value="BHF-UCL"/>
</dbReference>
<dbReference type="GO" id="GO:0005737">
    <property type="term" value="C:cytoplasm"/>
    <property type="evidence" value="ECO:0000314"/>
    <property type="project" value="MGI"/>
</dbReference>
<dbReference type="GO" id="GO:0005829">
    <property type="term" value="C:cytosol"/>
    <property type="evidence" value="ECO:0000304"/>
    <property type="project" value="Reactome"/>
</dbReference>
<dbReference type="GO" id="GO:0005654">
    <property type="term" value="C:nucleoplasm"/>
    <property type="evidence" value="ECO:0000304"/>
    <property type="project" value="Reactome"/>
</dbReference>
<dbReference type="GO" id="GO:0005634">
    <property type="term" value="C:nucleus"/>
    <property type="evidence" value="ECO:0000314"/>
    <property type="project" value="UniProtKB"/>
</dbReference>
<dbReference type="GO" id="GO:0032991">
    <property type="term" value="C:protein-containing complex"/>
    <property type="evidence" value="ECO:0000266"/>
    <property type="project" value="MGI"/>
</dbReference>
<dbReference type="GO" id="GO:0005667">
    <property type="term" value="C:transcription regulator complex"/>
    <property type="evidence" value="ECO:0000314"/>
    <property type="project" value="MGI"/>
</dbReference>
<dbReference type="GO" id="GO:0005524">
    <property type="term" value="F:ATP binding"/>
    <property type="evidence" value="ECO:0007669"/>
    <property type="project" value="InterPro"/>
</dbReference>
<dbReference type="GO" id="GO:0043425">
    <property type="term" value="F:bHLH transcription factor binding"/>
    <property type="evidence" value="ECO:0000353"/>
    <property type="project" value="MGI"/>
</dbReference>
<dbReference type="GO" id="GO:0003682">
    <property type="term" value="F:chromatin binding"/>
    <property type="evidence" value="ECO:0000314"/>
    <property type="project" value="MGI"/>
</dbReference>
<dbReference type="GO" id="GO:0031490">
    <property type="term" value="F:chromatin DNA binding"/>
    <property type="evidence" value="ECO:0000314"/>
    <property type="project" value="MGI"/>
</dbReference>
<dbReference type="GO" id="GO:0000987">
    <property type="term" value="F:cis-regulatory region sequence-specific DNA binding"/>
    <property type="evidence" value="ECO:0000315"/>
    <property type="project" value="ARUK-UCL"/>
</dbReference>
<dbReference type="GO" id="GO:0001228">
    <property type="term" value="F:DNA-binding transcription activator activity, RNA polymerase II-specific"/>
    <property type="evidence" value="ECO:0000314"/>
    <property type="project" value="NTNU_SB"/>
</dbReference>
<dbReference type="GO" id="GO:0003700">
    <property type="term" value="F:DNA-binding transcription factor activity"/>
    <property type="evidence" value="ECO:0000314"/>
    <property type="project" value="MGI"/>
</dbReference>
<dbReference type="GO" id="GO:0140297">
    <property type="term" value="F:DNA-binding transcription factor binding"/>
    <property type="evidence" value="ECO:0000353"/>
    <property type="project" value="MGI"/>
</dbReference>
<dbReference type="GO" id="GO:0019904">
    <property type="term" value="F:protein domain specific binding"/>
    <property type="evidence" value="ECO:0000353"/>
    <property type="project" value="MGI"/>
</dbReference>
<dbReference type="GO" id="GO:0000978">
    <property type="term" value="F:RNA polymerase II cis-regulatory region sequence-specific DNA binding"/>
    <property type="evidence" value="ECO:0000314"/>
    <property type="project" value="NTNU_SB"/>
</dbReference>
<dbReference type="GO" id="GO:0000976">
    <property type="term" value="F:transcription cis-regulatory region binding"/>
    <property type="evidence" value="ECO:0000314"/>
    <property type="project" value="UniProtKB"/>
</dbReference>
<dbReference type="GO" id="GO:0030509">
    <property type="term" value="P:BMP signaling pathway"/>
    <property type="evidence" value="ECO:0000315"/>
    <property type="project" value="BHF-UCL"/>
</dbReference>
<dbReference type="GO" id="GO:0030282">
    <property type="term" value="P:bone mineralization"/>
    <property type="evidence" value="ECO:0000314"/>
    <property type="project" value="MGI"/>
</dbReference>
<dbReference type="GO" id="GO:0048469">
    <property type="term" value="P:cell maturation"/>
    <property type="evidence" value="ECO:0000315"/>
    <property type="project" value="MGI"/>
</dbReference>
<dbReference type="GO" id="GO:0008283">
    <property type="term" value="P:cell population proliferation"/>
    <property type="evidence" value="ECO:0000315"/>
    <property type="project" value="MGI"/>
</dbReference>
<dbReference type="GO" id="GO:0002063">
    <property type="term" value="P:chondrocyte development"/>
    <property type="evidence" value="ECO:0000315"/>
    <property type="project" value="MGI"/>
</dbReference>
<dbReference type="GO" id="GO:0002062">
    <property type="term" value="P:chondrocyte differentiation"/>
    <property type="evidence" value="ECO:0000315"/>
    <property type="project" value="MGI"/>
</dbReference>
<dbReference type="GO" id="GO:0048701">
    <property type="term" value="P:embryonic cranial skeleton morphogenesis"/>
    <property type="evidence" value="ECO:0000316"/>
    <property type="project" value="MGI"/>
</dbReference>
<dbReference type="GO" id="GO:0035115">
    <property type="term" value="P:embryonic forelimb morphogenesis"/>
    <property type="evidence" value="ECO:0000315"/>
    <property type="project" value="MGI"/>
</dbReference>
<dbReference type="GO" id="GO:0001958">
    <property type="term" value="P:endochondral ossification"/>
    <property type="evidence" value="ECO:0000315"/>
    <property type="project" value="MGI"/>
</dbReference>
<dbReference type="GO" id="GO:0050673">
    <property type="term" value="P:epithelial cell proliferation"/>
    <property type="evidence" value="ECO:0000315"/>
    <property type="project" value="MGI"/>
</dbReference>
<dbReference type="GO" id="GO:0010467">
    <property type="term" value="P:gene expression"/>
    <property type="evidence" value="ECO:0000314"/>
    <property type="project" value="MGI"/>
</dbReference>
<dbReference type="GO" id="GO:0036076">
    <property type="term" value="P:ligamentous ossification"/>
    <property type="evidence" value="ECO:0000316"/>
    <property type="project" value="MGI"/>
</dbReference>
<dbReference type="GO" id="GO:0045892">
    <property type="term" value="P:negative regulation of DNA-templated transcription"/>
    <property type="evidence" value="ECO:0000314"/>
    <property type="project" value="UniProtKB"/>
</dbReference>
<dbReference type="GO" id="GO:0045879">
    <property type="term" value="P:negative regulation of smoothened signaling pathway"/>
    <property type="evidence" value="ECO:0000315"/>
    <property type="project" value="MGI"/>
</dbReference>
<dbReference type="GO" id="GO:0042475">
    <property type="term" value="P:odontogenesis of dentin-containing tooth"/>
    <property type="evidence" value="ECO:0000315"/>
    <property type="project" value="MGI"/>
</dbReference>
<dbReference type="GO" id="GO:0002076">
    <property type="term" value="P:osteoblast development"/>
    <property type="evidence" value="ECO:0000316"/>
    <property type="project" value="MGI"/>
</dbReference>
<dbReference type="GO" id="GO:0001649">
    <property type="term" value="P:osteoblast differentiation"/>
    <property type="evidence" value="ECO:0000314"/>
    <property type="project" value="MGI"/>
</dbReference>
<dbReference type="GO" id="GO:0002051">
    <property type="term" value="P:osteoblast fate commitment"/>
    <property type="evidence" value="ECO:0000316"/>
    <property type="project" value="MGI"/>
</dbReference>
<dbReference type="GO" id="GO:0008284">
    <property type="term" value="P:positive regulation of cell population proliferation"/>
    <property type="evidence" value="ECO:0000316"/>
    <property type="project" value="MGI"/>
</dbReference>
<dbReference type="GO" id="GO:0032332">
    <property type="term" value="P:positive regulation of chondrocyte differentiation"/>
    <property type="evidence" value="ECO:0000315"/>
    <property type="project" value="MGI"/>
</dbReference>
<dbReference type="GO" id="GO:0045893">
    <property type="term" value="P:positive regulation of DNA-templated transcription"/>
    <property type="evidence" value="ECO:0000314"/>
    <property type="project" value="MGI"/>
</dbReference>
<dbReference type="GO" id="GO:0050679">
    <property type="term" value="P:positive regulation of epithelial cell proliferation"/>
    <property type="evidence" value="ECO:0000315"/>
    <property type="project" value="MGI"/>
</dbReference>
<dbReference type="GO" id="GO:0010628">
    <property type="term" value="P:positive regulation of gene expression"/>
    <property type="evidence" value="ECO:0000314"/>
    <property type="project" value="MGI"/>
</dbReference>
<dbReference type="GO" id="GO:0045669">
    <property type="term" value="P:positive regulation of osteoblast differentiation"/>
    <property type="evidence" value="ECO:0000314"/>
    <property type="project" value="MGI"/>
</dbReference>
<dbReference type="GO" id="GO:2000648">
    <property type="term" value="P:positive regulation of stem cell proliferation"/>
    <property type="evidence" value="ECO:0000315"/>
    <property type="project" value="MGI"/>
</dbReference>
<dbReference type="GO" id="GO:0045944">
    <property type="term" value="P:positive regulation of transcription by RNA polymerase II"/>
    <property type="evidence" value="ECO:0000314"/>
    <property type="project" value="NTNU_SB"/>
</dbReference>
<dbReference type="GO" id="GO:0040036">
    <property type="term" value="P:regulation of fibroblast growth factor receptor signaling pathway"/>
    <property type="evidence" value="ECO:0000315"/>
    <property type="project" value="MGI"/>
</dbReference>
<dbReference type="GO" id="GO:0010468">
    <property type="term" value="P:regulation of gene expression"/>
    <property type="evidence" value="ECO:0000314"/>
    <property type="project" value="MGI"/>
</dbReference>
<dbReference type="GO" id="GO:0042487">
    <property type="term" value="P:regulation of odontogenesis of dentin-containing tooth"/>
    <property type="evidence" value="ECO:0000315"/>
    <property type="project" value="MGI"/>
</dbReference>
<dbReference type="GO" id="GO:0030278">
    <property type="term" value="P:regulation of ossification"/>
    <property type="evidence" value="ECO:0000315"/>
    <property type="project" value="MGI"/>
</dbReference>
<dbReference type="GO" id="GO:0045667">
    <property type="term" value="P:regulation of osteoblast differentiation"/>
    <property type="evidence" value="ECO:0000314"/>
    <property type="project" value="MGI"/>
</dbReference>
<dbReference type="GO" id="GO:1904383">
    <property type="term" value="P:response to sodium phosphate"/>
    <property type="evidence" value="ECO:0000314"/>
    <property type="project" value="MGI"/>
</dbReference>
<dbReference type="GO" id="GO:0001501">
    <property type="term" value="P:skeletal system development"/>
    <property type="evidence" value="ECO:0000315"/>
    <property type="project" value="MGI"/>
</dbReference>
<dbReference type="GO" id="GO:0048705">
    <property type="term" value="P:skeletal system morphogenesis"/>
    <property type="evidence" value="ECO:0000315"/>
    <property type="project" value="MGI"/>
</dbReference>
<dbReference type="GO" id="GO:0060395">
    <property type="term" value="P:SMAD protein signal transduction"/>
    <property type="evidence" value="ECO:0007669"/>
    <property type="project" value="Ensembl"/>
</dbReference>
<dbReference type="GO" id="GO:0007224">
    <property type="term" value="P:smoothened signaling pathway"/>
    <property type="evidence" value="ECO:0000315"/>
    <property type="project" value="MGI"/>
</dbReference>
<dbReference type="GO" id="GO:0048863">
    <property type="term" value="P:stem cell differentiation"/>
    <property type="evidence" value="ECO:0000314"/>
    <property type="project" value="MGI"/>
</dbReference>
<dbReference type="GO" id="GO:0072089">
    <property type="term" value="P:stem cell proliferation"/>
    <property type="evidence" value="ECO:0000315"/>
    <property type="project" value="MGI"/>
</dbReference>
<dbReference type="GO" id="GO:0030217">
    <property type="term" value="P:T cell differentiation"/>
    <property type="evidence" value="ECO:0000314"/>
    <property type="project" value="MGI"/>
</dbReference>
<dbReference type="FunFam" id="2.60.40.720:FF:000001">
    <property type="entry name" value="Runt-related transcription factor"/>
    <property type="match status" value="1"/>
</dbReference>
<dbReference type="FunFam" id="4.10.770.10:FF:000001">
    <property type="entry name" value="Runt-related transcription factor"/>
    <property type="match status" value="1"/>
</dbReference>
<dbReference type="Gene3D" id="2.60.40.720">
    <property type="match status" value="1"/>
</dbReference>
<dbReference type="Gene3D" id="4.10.770.10">
    <property type="entry name" value="Signal Protein Aml-1b, Chain A, domain 3"/>
    <property type="match status" value="1"/>
</dbReference>
<dbReference type="InterPro" id="IPR000040">
    <property type="entry name" value="AML1_Runt"/>
</dbReference>
<dbReference type="InterPro" id="IPR008967">
    <property type="entry name" value="p53-like_TF_DNA-bd_sf"/>
</dbReference>
<dbReference type="InterPro" id="IPR012346">
    <property type="entry name" value="p53/RUNT-type_TF_DNA-bd_sf"/>
</dbReference>
<dbReference type="InterPro" id="IPR013524">
    <property type="entry name" value="Runt_dom"/>
</dbReference>
<dbReference type="InterPro" id="IPR027384">
    <property type="entry name" value="Runx_central_dom_sf"/>
</dbReference>
<dbReference type="InterPro" id="IPR013711">
    <property type="entry name" value="RunxI_C_dom"/>
</dbReference>
<dbReference type="PANTHER" id="PTHR11950">
    <property type="entry name" value="RUNT RELATED"/>
    <property type="match status" value="1"/>
</dbReference>
<dbReference type="PANTHER" id="PTHR11950:SF7">
    <property type="entry name" value="RUNT-RELATED TRANSCRIPTION FACTOR 2"/>
    <property type="match status" value="1"/>
</dbReference>
<dbReference type="Pfam" id="PF00853">
    <property type="entry name" value="Runt"/>
    <property type="match status" value="1"/>
</dbReference>
<dbReference type="Pfam" id="PF08504">
    <property type="entry name" value="RunxI"/>
    <property type="match status" value="1"/>
</dbReference>
<dbReference type="PRINTS" id="PR00967">
    <property type="entry name" value="ONCOGENEAML1"/>
</dbReference>
<dbReference type="SUPFAM" id="SSF81995">
    <property type="entry name" value="beta-sandwich domain of Sec23/24"/>
    <property type="match status" value="1"/>
</dbReference>
<dbReference type="SUPFAM" id="SSF49417">
    <property type="entry name" value="p53-like transcription factors"/>
    <property type="match status" value="1"/>
</dbReference>
<dbReference type="PROSITE" id="PS51062">
    <property type="entry name" value="RUNT"/>
    <property type="match status" value="1"/>
</dbReference>
<reference key="1">
    <citation type="journal article" date="1993" name="Proc. Natl. Acad. Sci. U.S.A.">
        <title>PEBP2/PEA2 represents a family of transcription factors homologous to the products of the Drosophila runt gene and the human AML1 gene.</title>
        <authorList>
            <person name="Ogawa E."/>
            <person name="Maruyama M."/>
            <person name="Kagoshima H."/>
            <person name="Inuzuka M."/>
            <person name="Lu J."/>
            <person name="Satake M."/>
            <person name="Shigesada K."/>
            <person name="Ito Y."/>
        </authorList>
    </citation>
    <scope>NUCLEOTIDE SEQUENCE [MRNA] (ISOFORMS 3 AND 4)</scope>
</reference>
<reference key="2">
    <citation type="journal article" date="1997" name="Cell">
        <title>Osf2/Cbfa1: a transcriptional activator of osteoblast differentiation.</title>
        <authorList>
            <person name="Ducy P."/>
            <person name="Zhang R."/>
            <person name="Geoffroy V."/>
            <person name="Ridall A.L."/>
            <person name="Karsenty G."/>
        </authorList>
    </citation>
    <scope>NUCLEOTIDE SEQUENCE [MRNA] (ISOFORM 2)</scope>
    <scope>DEVELOPMENTAL STAGE (ISOFORM 2)</scope>
    <source>
        <strain>C57BL/6J</strain>
        <tissue>Osteoblast</tissue>
    </source>
</reference>
<reference key="3">
    <citation type="journal article" date="1997" name="Proc. Natl. Acad. Sci. U.S.A.">
        <title>Proviral insertions induce the expression of bone-specific isoforms of PEBP2alphaA (CBFA1): evidence for a new myc collaborating oncogene.</title>
        <authorList>
            <person name="Stewart M."/>
            <person name="Terry A."/>
            <person name="Hu M."/>
            <person name="O'Hara M."/>
            <person name="Blyth K."/>
            <person name="Baxter E."/>
            <person name="Cameron E."/>
            <person name="Onions D.E."/>
            <person name="Neil J.C."/>
        </authorList>
    </citation>
    <scope>NUCLEOTIDE SEQUENCE [MRNA] (ISOFORMS 2; 3; 4; 5; 6; 7; 8 AND 9)</scope>
    <source>
        <strain>CD2-MYC</strain>
    </source>
</reference>
<reference key="4">
    <citation type="journal article" date="1998" name="Gene">
        <title>Genomic structure and isoform expression of the mouse, rat and human Cbfa1/Osf2 transcription factor.</title>
        <authorList>
            <person name="Xiao Z.S."/>
            <person name="Thomas R."/>
            <person name="Hinson T.K."/>
            <person name="Quarles L.D."/>
        </authorList>
    </citation>
    <scope>PARTIAL NUCLEOTIDE SEQUENCE [GENOMIC DNA / MRNA] (ISOFORMS 2 AND 6)</scope>
    <scope>ALTERNATIVE SPLICING</scope>
</reference>
<reference key="5">
    <citation type="journal article" date="1999" name="Biochim. Biophys. Acta">
        <title>Isolation and characterization of the distal promoter region of mouse Cbfa1.</title>
        <authorList>
            <person name="Fujiwara M."/>
            <person name="Tagashira S."/>
            <person name="Harada H."/>
            <person name="Ogawa S."/>
            <person name="Katsumata T."/>
            <person name="Nakatsuka M."/>
            <person name="Komori T."/>
            <person name="Takada H."/>
        </authorList>
    </citation>
    <scope>NUCLEOTIDE SEQUENCE [GENOMIC DNA] OF 1-98 (ISOFORMS 1 AND 2)</scope>
</reference>
<reference key="6">
    <citation type="journal article" date="1993" name="Virology">
        <title>Molecular cloning and characterization of PEBP2 beta, the heterodimeric partner of a novel Drosophila runt-related DNA binding protein PEBP2 alpha.</title>
        <authorList>
            <person name="Ogawa E."/>
            <person name="Inuzuka M."/>
            <person name="Maruyama M."/>
            <person name="Satake M."/>
            <person name="Naito-Fujimoto M."/>
            <person name="Ito Y."/>
            <person name="Shigesada K."/>
        </authorList>
    </citation>
    <scope>PROTEIN SEQUENCE OF 263-277 AND 305-319</scope>
</reference>
<reference key="7">
    <citation type="submission" date="1999-05" db="EMBL/GenBank/DDBJ databases">
        <title>Analysis of the two PEBP2aA/cbfa1 promoter regions.</title>
        <authorList>
            <person name="Chi X.-Z."/>
            <person name="Bae S.-C."/>
        </authorList>
    </citation>
    <scope>NUCLEOTIDE SEQUENCE [GENOMIC DNA] OF 1-35</scope>
    <source>
        <strain>129</strain>
    </source>
</reference>
<reference key="8">
    <citation type="journal article" date="1997" name="Cell">
        <title>Targeted disruption of Cbfa1 results in a complete lack of bone formation owing to maturational arrest of osteoblasts.</title>
        <authorList>
            <person name="Komori T."/>
            <person name="Yagi H."/>
            <person name="Nomura S."/>
            <person name="Yamaguchi A."/>
            <person name="Sasaki K."/>
            <person name="Deguchi K."/>
            <person name="Shimizu Y."/>
            <person name="Bronson R.T."/>
            <person name="Gao Y.-H."/>
            <person name="Inada M."/>
            <person name="Sato M."/>
            <person name="Okamoto R."/>
            <person name="Kitamura Y."/>
            <person name="Yoshiki S."/>
            <person name="Kishimoto T."/>
        </authorList>
    </citation>
    <scope>FUNCTION</scope>
</reference>
<reference key="9">
    <citation type="journal article" date="2000" name="J. Biol. Chem.">
        <title>MAPK pathways activate and phosphorylate the osteoblast-specific transcription factor, Cbfa1.</title>
        <authorList>
            <person name="Xiao G."/>
            <person name="Jiang D."/>
            <person name="Thomas P."/>
            <person name="Benson M.D."/>
            <person name="Guan K."/>
            <person name="Karsenty G."/>
            <person name="Franceschi R.T."/>
        </authorList>
    </citation>
    <scope>PHOSPHORYLATION</scope>
</reference>
<reference key="10">
    <citation type="journal article" date="2005" name="J. Biol. Chem.">
        <title>The interferon-inducible p204 protein acts as a transcriptional coactivator of Cbfa1 and enhances osteoblast differentiation.</title>
        <authorList>
            <person name="Liu C.-J."/>
            <person name="Chang E."/>
            <person name="Yu J."/>
            <person name="Carlson C.S."/>
            <person name="Prazak L."/>
            <person name="Yu X.-P."/>
            <person name="Ding B."/>
            <person name="Lengyel P."/>
            <person name="Di Cesare P.E."/>
        </authorList>
    </citation>
    <scope>INTERACTION WITH IFI204</scope>
</reference>
<reference key="11">
    <citation type="journal article" date="2006" name="Cell">
        <title>SATB2 is a multifunctional determinant of craniofacial patterning and osteoblast differentiation.</title>
        <authorList>
            <person name="Dobreva G."/>
            <person name="Chahrour M."/>
            <person name="Dautzenberg M."/>
            <person name="Chirivella L."/>
            <person name="Kanzler B."/>
            <person name="Farinas I."/>
            <person name="Karsenty G."/>
            <person name="Grosschedl R."/>
        </authorList>
    </citation>
    <scope>INTERACTION WITH SATB2</scope>
</reference>
<reference key="12">
    <citation type="journal article" date="2006" name="Science">
        <title>Regulation of adult bone mass by the zinc finger adapter protein Schnurri-3.</title>
        <authorList>
            <person name="Jones D.C."/>
            <person name="Wein M.N."/>
            <person name="Oukka M."/>
            <person name="Hofstaetter J.G."/>
            <person name="Glimcher M.J."/>
            <person name="Glimcher L.H."/>
        </authorList>
    </citation>
    <scope>INTERACTION WITH HIVEP3</scope>
</reference>
<reference key="13">
    <citation type="journal article" date="2008" name="J. Cell. Biochem.">
        <title>p68 (Ddx5) interacts with Runx2 and regulates osteoblast differentiation.</title>
        <authorList>
            <person name="Jensen E.D."/>
            <person name="Niu L."/>
            <person name="Caretti G."/>
            <person name="Nicol S.M."/>
            <person name="Teplyuk N."/>
            <person name="Stein G.S."/>
            <person name="Sartorelli V."/>
            <person name="van Wijnen A.J."/>
            <person name="Fuller-Pace F.V."/>
            <person name="Westendorf J.J."/>
        </authorList>
    </citation>
    <scope>INTERACTION WITH DDX5 (ISOFORM 3)</scope>
</reference>
<reference key="14">
    <citation type="journal article" date="2010" name="Mol. Endocrinol.">
        <title>Runx2 trans-activation mediated by the MSX2-interacting nuclear target requires homeodomain interacting protein kinase-3.</title>
        <authorList>
            <person name="Sierra O.L."/>
            <person name="Towler D.A."/>
        </authorList>
    </citation>
    <scope>FUNCTION</scope>
    <scope>PHOSPHORYLATION BY HIPK3</scope>
    <scope>INTERACTION WITH HIPK3</scope>
</reference>
<reference key="15">
    <citation type="journal article" date="2011" name="J. Biol. Chem.">
        <title>Parathyroid hormone-responsive Smad3-related factor, Tmem119, promotes osteoblast differentiation and interacts with the bone morphogenetic protein-Runx2 pathway.</title>
        <authorList>
            <person name="Hisa I."/>
            <person name="Inoue Y."/>
            <person name="Hendy G.N."/>
            <person name="Canaff L."/>
            <person name="Kitazawa R."/>
            <person name="Kitazawa S."/>
            <person name="Komori T."/>
            <person name="Sugimoto T."/>
            <person name="Seino S."/>
            <person name="Kaji H."/>
        </authorList>
    </citation>
    <scope>INTERACTION WITH TMEM119</scope>
</reference>
<reference key="16">
    <citation type="journal article" date="2011" name="J. Biol. Chem.">
        <title>Foxo1 mediates insulin-like growth factor 1 (IGF1)/insulin regulation of osteocalcin expression by antagonizing Runx2 in osteoblasts.</title>
        <authorList>
            <person name="Yang S."/>
            <person name="Xu H."/>
            <person name="Yu S."/>
            <person name="Cao H."/>
            <person name="Fan J."/>
            <person name="Ge C."/>
            <person name="Fransceschi R.T."/>
            <person name="Dong H.H."/>
            <person name="Xiao G."/>
        </authorList>
    </citation>
    <scope>INTERACTION WITH FOXO1</scope>
</reference>
<reference key="17">
    <citation type="journal article" date="2013" name="Eur. J. Oral Sci.">
        <title>Msx1 regulates proliferation and differentiation of mouse dental mesenchymal cells in culture.</title>
        <authorList>
            <person name="Feng X.Y."/>
            <person name="Zhao Y.M."/>
            <person name="Wang W.J."/>
            <person name="Ge L.H."/>
        </authorList>
    </citation>
    <scope>DEVELOPMENTAL STAGE</scope>
</reference>
<reference key="18">
    <citation type="journal article" date="2014" name="Mol. Cell. Proteomics">
        <title>Immunoaffinity enrichment and mass spectrometry analysis of protein methylation.</title>
        <authorList>
            <person name="Guo A."/>
            <person name="Gu H."/>
            <person name="Zhou J."/>
            <person name="Mulhern D."/>
            <person name="Wang Y."/>
            <person name="Lee K.A."/>
            <person name="Yang V."/>
            <person name="Aguiar M."/>
            <person name="Kornhauser J."/>
            <person name="Jia X."/>
            <person name="Ren J."/>
            <person name="Beausoleil S.A."/>
            <person name="Silva J.C."/>
            <person name="Vemulapalli V."/>
            <person name="Bedford M.T."/>
            <person name="Comb M.J."/>
        </authorList>
    </citation>
    <scope>METHYLATION [LARGE SCALE ANALYSIS] AT ARG-353</scope>
    <scope>IDENTIFICATION BY MASS SPECTROMETRY [LARGE SCALE ANALYSIS]</scope>
    <source>
        <tissue>Embryo</tissue>
    </source>
</reference>
<reference key="19">
    <citation type="journal article" date="2018" name="Eur. J. Oral Sci.">
        <title>Homeobox protein MSX-1 inhibits expression of bone morphogenetic protein 2, bone morphogenetic protein 4, and lymphoid enhancer-binding factor 1 via Wnt/beta-catenin signaling to prevent differentiation of dental mesenchymal cells during the late bell stage.</title>
        <authorList>
            <person name="Feng X.Y."/>
            <person name="Wu X.S."/>
            <person name="Wang J.S."/>
            <person name="Zhang C.M."/>
            <person name="Wang S.L."/>
        </authorList>
    </citation>
    <scope>DEVELOPMENTAL STAGE</scope>
</reference>
<reference key="20">
    <citation type="journal article" date="2022" name="Stem Cells">
        <title>IPO7 Promotes Odontoblastic Differentiation and Inhibits Osteoblastic Differentiation Through Regulation of RUNX2 Expression and Translocation.</title>
        <authorList>
            <person name="Zhang Y."/>
            <person name="Zhang H."/>
            <person name="Xiao Z."/>
            <person name="Yuan G."/>
            <person name="Yang G."/>
        </authorList>
    </citation>
    <scope>INTERACTION WITH IPO7</scope>
    <scope>SUBCELLULAR LOCATION</scope>
    <scope>INDUCTION BY ODONTOBLASTIC AND OSTEOBLASTIC DIFFERENTIATION</scope>
</reference>